<gene>
    <name type="primary">psaD</name>
</gene>
<keyword id="KW-0002">3D-structure</keyword>
<keyword id="KW-0150">Chloroplast</keyword>
<keyword id="KW-0903">Direct protein sequencing</keyword>
<keyword id="KW-0472">Membrane</keyword>
<keyword id="KW-0602">Photosynthesis</keyword>
<keyword id="KW-0603">Photosystem I</keyword>
<keyword id="KW-0934">Plastid</keyword>
<keyword id="KW-1185">Reference proteome</keyword>
<keyword id="KW-0793">Thylakoid</keyword>
<keyword id="KW-0809">Transit peptide</keyword>
<sequence length="212" mass="23103">MAMATQATLFSPSSLSSAKPIDTRLTTSFKQPSAVTFASKPASRHHSIRAAAAAEGKAAAATETKEAPKGFTPPELDPNTPSPIFAGSTGGLLRKAQVEEFYVITWESPKEQIFEMPTGGAAIMREGPNLLKLARKEQCLALGTRLRSKYKIKYQFYRVFPSGEVQYLHPKDGVYPEKVNPGRQGVGLNMRSIGKNVSPIEVKFTGKQPYDL</sequence>
<proteinExistence type="evidence at protein level"/>
<protein>
    <recommendedName>
        <fullName>Photosystem I reaction center subunit II, chloroplastic</fullName>
    </recommendedName>
    <alternativeName>
        <fullName>Photosystem I 20 kDa subunit</fullName>
        <shortName>PSI-D</shortName>
    </alternativeName>
</protein>
<name>PSAD_SPIOL</name>
<evidence type="ECO:0000255" key="1"/>
<evidence type="ECO:0000256" key="2">
    <source>
        <dbReference type="SAM" id="MobiDB-lite"/>
    </source>
</evidence>
<evidence type="ECO:0000269" key="3">
    <source>
    </source>
</evidence>
<evidence type="ECO:0000269" key="4">
    <source>
    </source>
</evidence>
<evidence type="ECO:0000269" key="5">
    <source>
    </source>
</evidence>
<evidence type="ECO:0000305" key="6"/>
<evidence type="ECO:0007829" key="7">
    <source>
        <dbReference type="PDB" id="2O01"/>
    </source>
</evidence>
<evidence type="ECO:0007829" key="8">
    <source>
        <dbReference type="PDB" id="2WSC"/>
    </source>
</evidence>
<organism>
    <name type="scientific">Spinacia oleracea</name>
    <name type="common">Spinach</name>
    <dbReference type="NCBI Taxonomy" id="3562"/>
    <lineage>
        <taxon>Eukaryota</taxon>
        <taxon>Viridiplantae</taxon>
        <taxon>Streptophyta</taxon>
        <taxon>Embryophyta</taxon>
        <taxon>Tracheophyta</taxon>
        <taxon>Spermatophyta</taxon>
        <taxon>Magnoliopsida</taxon>
        <taxon>eudicotyledons</taxon>
        <taxon>Gunneridae</taxon>
        <taxon>Pentapetalae</taxon>
        <taxon>Caryophyllales</taxon>
        <taxon>Chenopodiaceae</taxon>
        <taxon>Chenopodioideae</taxon>
        <taxon>Anserineae</taxon>
        <taxon>Spinacia</taxon>
    </lineage>
</organism>
<reference key="1">
    <citation type="journal article" date="1988" name="Curr. Genet.">
        <title>Nucleotide sequences of cDNAs encoding the entire precursor polypeptides for subunits II and III of the photosystem I reaction center from spinach.</title>
        <authorList>
            <person name="Muench S."/>
            <person name="Ljungberg U."/>
            <person name="Steppuhn J."/>
            <person name="Schneiderbauer A."/>
            <person name="Nechushtai R."/>
            <person name="Beyreuther K."/>
            <person name="Herrmann R.G."/>
        </authorList>
    </citation>
    <scope>NUCLEOTIDE SEQUENCE</scope>
    <source>
        <tissue>Seedling</tissue>
    </source>
</reference>
<reference key="2">
    <citation type="journal article" date="1988" name="FEBS Lett.">
        <title>Cloning and sequencing of spinach cDNA clones encoding the 20 kDa PS I polypeptide.</title>
        <authorList>
            <person name="Lagoutte B."/>
        </authorList>
    </citation>
    <scope>NUCLEOTIDE SEQUENCE [MRNA]</scope>
    <source>
        <tissue>Leaf</tissue>
    </source>
</reference>
<reference key="3">
    <citation type="journal article" date="1994" name="Plant J.">
        <title>Promoter and leader sequences of the spinach PsaD and PsaF genes direct an opposite light response in tobacco cotyledons: PsaD sequences downstream of the ATG codon are required for a positive light response.</title>
        <authorList>
            <person name="Flieger K."/>
            <person name="Wicke A."/>
            <person name="Herrmann R.G."/>
            <person name="Oelmueller R."/>
        </authorList>
    </citation>
    <scope>NUCLEOTIDE SEQUENCE [GENOMIC DNA]</scope>
    <scope>INDUCTION</scope>
    <source>
        <strain>cv. Monatol</strain>
        <tissue>Seedling</tissue>
    </source>
</reference>
<reference key="4">
    <citation type="submission" date="1996-08" db="EMBL/GenBank/DDBJ databases">
        <authorList>
            <person name="Oelmueller R."/>
        </authorList>
    </citation>
    <scope>SEQUENCE REVISION</scope>
</reference>
<reference key="5">
    <citation type="journal article" date="1988" name="J. Biochem.">
        <title>The protein responsible for center A/B in spinach photosystem I: isolation with iron-sulfur cluster(s) and complete sequence analysis.</title>
        <authorList>
            <person name="Oh-oka H."/>
            <person name="Takahashi Y."/>
            <person name="Kuriyama K."/>
            <person name="Saeki K."/>
            <person name="Matsubara H."/>
        </authorList>
    </citation>
    <scope>PROTEIN SEQUENCE OF 51-63</scope>
</reference>
<reference key="6">
    <citation type="journal article" date="1992" name="Eur. J. Biochem.">
        <title>Purification and membrane topology of PSI-D and PSI-E, two subunits of the photosystem I reaction center.</title>
        <authorList>
            <person name="Lagoutte B."/>
            <person name="Vallon O."/>
        </authorList>
    </citation>
    <scope>PARTIAL PROTEIN SEQUENCE</scope>
    <scope>SUBCELLULAR LOCATION</scope>
</reference>
<feature type="transit peptide" description="Chloroplast" evidence="4">
    <location>
        <begin position="1"/>
        <end position="50"/>
    </location>
</feature>
<feature type="chain" id="PRO_0000029377" description="Photosystem I reaction center subunit II, chloroplastic">
    <location>
        <begin position="51"/>
        <end position="212"/>
    </location>
</feature>
<feature type="region of interest" description="Disordered" evidence="2">
    <location>
        <begin position="53"/>
        <end position="80"/>
    </location>
</feature>
<feature type="region of interest" description="Ferredoxin and ferredoxin-oxidoreductase binding" evidence="1">
    <location>
        <begin position="145"/>
        <end position="153"/>
    </location>
</feature>
<feature type="compositionally biased region" description="Low complexity" evidence="2">
    <location>
        <begin position="53"/>
        <end position="62"/>
    </location>
</feature>
<feature type="sequence conflict" description="In Ref. 3; CAA54744." evidence="6" ref="3">
    <original>ATQ</original>
    <variation>GTP</variation>
    <location>
        <begin position="4"/>
        <end position="6"/>
    </location>
</feature>
<feature type="sequence conflict" description="In Ref. 3; CAA54744." evidence="6" ref="3">
    <original>P</original>
    <variation>R</variation>
    <location>
        <position position="12"/>
    </location>
</feature>
<feature type="sequence conflict" description="In Ref. 3; CAA54744." evidence="6" ref="3">
    <original>D</original>
    <variation>E</variation>
    <location>
        <position position="22"/>
    </location>
</feature>
<feature type="sequence conflict" description="In Ref. 1; CAA32182." evidence="6" ref="1">
    <original>VT</original>
    <variation>LS</variation>
    <location>
        <begin position="35"/>
        <end position="36"/>
    </location>
</feature>
<feature type="sequence conflict" description="In Ref. 3; CAA54744." evidence="6" ref="3">
    <original>HHS</original>
    <variation>LHT</variation>
    <location>
        <begin position="45"/>
        <end position="47"/>
    </location>
</feature>
<feature type="sequence conflict" description="In Ref. 2; CAA68728." evidence="6" ref="2">
    <original>A</original>
    <variation>R</variation>
    <location>
        <position position="58"/>
    </location>
</feature>
<feature type="sequence conflict" description="In Ref. 1 and 5." evidence="6" ref="1 5">
    <original>AA</original>
    <variation>TP</variation>
    <location>
        <begin position="60"/>
        <end position="61"/>
    </location>
</feature>
<feature type="sequence conflict" description="In Ref. 3; CAA54744." evidence="6" ref="3">
    <original>PKG</original>
    <variation>TKA</variation>
    <location>
        <begin position="68"/>
        <end position="70"/>
    </location>
</feature>
<feature type="sequence conflict" description="In Ref. 3; CAA54744." evidence="6" ref="3">
    <location>
        <position position="91"/>
    </location>
</feature>
<feature type="strand" evidence="8">
    <location>
        <begin position="89"/>
        <end position="91"/>
    </location>
</feature>
<feature type="strand" evidence="8">
    <location>
        <begin position="97"/>
        <end position="99"/>
    </location>
</feature>
<feature type="strand" evidence="8">
    <location>
        <begin position="103"/>
        <end position="105"/>
    </location>
</feature>
<feature type="strand" evidence="7">
    <location>
        <begin position="109"/>
        <end position="111"/>
    </location>
</feature>
<feature type="turn" evidence="8">
    <location>
        <begin position="116"/>
        <end position="119"/>
    </location>
</feature>
<feature type="strand" evidence="8">
    <location>
        <begin position="130"/>
        <end position="132"/>
    </location>
</feature>
<feature type="turn" evidence="8">
    <location>
        <begin position="136"/>
        <end position="139"/>
    </location>
</feature>
<feature type="turn" evidence="8">
    <location>
        <begin position="141"/>
        <end position="147"/>
    </location>
</feature>
<feature type="strand" evidence="7">
    <location>
        <begin position="148"/>
        <end position="150"/>
    </location>
</feature>
<feature type="strand" evidence="8">
    <location>
        <begin position="155"/>
        <end position="157"/>
    </location>
</feature>
<feature type="turn" evidence="8">
    <location>
        <begin position="168"/>
        <end position="170"/>
    </location>
</feature>
<feature type="strand" evidence="8">
    <location>
        <begin position="171"/>
        <end position="173"/>
    </location>
</feature>
<feature type="strand" evidence="8">
    <location>
        <begin position="175"/>
        <end position="177"/>
    </location>
</feature>
<feature type="strand" evidence="8">
    <location>
        <begin position="189"/>
        <end position="191"/>
    </location>
</feature>
<feature type="turn" evidence="8">
    <location>
        <begin position="194"/>
        <end position="197"/>
    </location>
</feature>
<feature type="strand" evidence="7">
    <location>
        <begin position="206"/>
        <end position="208"/>
    </location>
</feature>
<accession>P12353</accession>
<accession>Q43642</accession>
<accession>Q9S8Z2</accession>
<accession>Q9S8Z3</accession>
<dbReference type="EMBL" id="X14017">
    <property type="protein sequence ID" value="CAA32182.1"/>
    <property type="molecule type" value="mRNA"/>
</dbReference>
<dbReference type="EMBL" id="Y00759">
    <property type="protein sequence ID" value="CAA68728.1"/>
    <property type="molecule type" value="mRNA"/>
</dbReference>
<dbReference type="EMBL" id="X77674">
    <property type="protein sequence ID" value="CAA54744.1"/>
    <property type="molecule type" value="Genomic_DNA"/>
</dbReference>
<dbReference type="PIR" id="S03016">
    <property type="entry name" value="A1SP2"/>
</dbReference>
<dbReference type="PDB" id="2O01">
    <property type="method" value="X-ray"/>
    <property type="resolution" value="3.40 A"/>
    <property type="chains" value="D=75-212"/>
</dbReference>
<dbReference type="PDB" id="2WSC">
    <property type="method" value="X-ray"/>
    <property type="resolution" value="3.30 A"/>
    <property type="chains" value="D=1-212"/>
</dbReference>
<dbReference type="PDB" id="2WSE">
    <property type="method" value="X-ray"/>
    <property type="resolution" value="3.49 A"/>
    <property type="chains" value="D=1-212"/>
</dbReference>
<dbReference type="PDB" id="2WSF">
    <property type="method" value="X-ray"/>
    <property type="resolution" value="3.48 A"/>
    <property type="chains" value="D=1-212"/>
</dbReference>
<dbReference type="PDB" id="9GRX">
    <property type="method" value="EM"/>
    <property type="resolution" value="3.19 A"/>
    <property type="chains" value="d=70-212"/>
</dbReference>
<dbReference type="PDBsum" id="2O01"/>
<dbReference type="PDBsum" id="2WSC"/>
<dbReference type="PDBsum" id="2WSE"/>
<dbReference type="PDBsum" id="2WSF"/>
<dbReference type="PDBsum" id="9GRX"/>
<dbReference type="EMDB" id="EMD-51527"/>
<dbReference type="SMR" id="P12353"/>
<dbReference type="IntAct" id="P12353">
    <property type="interactions" value="1"/>
</dbReference>
<dbReference type="OrthoDB" id="44at2759"/>
<dbReference type="EvolutionaryTrace" id="P12353"/>
<dbReference type="Proteomes" id="UP001155700">
    <property type="component" value="Unplaced"/>
</dbReference>
<dbReference type="GO" id="GO:0009535">
    <property type="term" value="C:chloroplast thylakoid membrane"/>
    <property type="evidence" value="ECO:0007669"/>
    <property type="project" value="UniProtKB-SubCell"/>
</dbReference>
<dbReference type="GO" id="GO:0009538">
    <property type="term" value="C:photosystem I reaction center"/>
    <property type="evidence" value="ECO:0007669"/>
    <property type="project" value="InterPro"/>
</dbReference>
<dbReference type="GO" id="GO:0015979">
    <property type="term" value="P:photosynthesis"/>
    <property type="evidence" value="ECO:0007669"/>
    <property type="project" value="UniProtKB-KW"/>
</dbReference>
<dbReference type="FunFam" id="3.30.1470.10:FF:000002">
    <property type="entry name" value="Photosystem I reaction center subunit II"/>
    <property type="match status" value="1"/>
</dbReference>
<dbReference type="Gene3D" id="3.30.1470.10">
    <property type="entry name" value="Photosystem I PsaD, reaction center subunit II"/>
    <property type="match status" value="1"/>
</dbReference>
<dbReference type="InterPro" id="IPR003685">
    <property type="entry name" value="PsaD"/>
</dbReference>
<dbReference type="InterPro" id="IPR036579">
    <property type="entry name" value="PsaD_sf"/>
</dbReference>
<dbReference type="PANTHER" id="PTHR31982:SF5">
    <property type="entry name" value="PHOTOSYSTEM I REACTION CENTER SUBUNIT II, CHLOROPLASTIC"/>
    <property type="match status" value="1"/>
</dbReference>
<dbReference type="PANTHER" id="PTHR31982">
    <property type="entry name" value="PHOTOSYSTEM I REACTION CENTER SUBUNIT II-1, CHLOROPLASTIC-RELATED"/>
    <property type="match status" value="1"/>
</dbReference>
<dbReference type="Pfam" id="PF02531">
    <property type="entry name" value="PsaD"/>
    <property type="match status" value="1"/>
</dbReference>
<dbReference type="SUPFAM" id="SSF64234">
    <property type="entry name" value="Photosystem I subunit PsaD"/>
    <property type="match status" value="1"/>
</dbReference>
<comment type="function">
    <text>PsaD can form complexes with ferredoxin and ferredoxin-oxidoreductase in photosystem I (PS I) reaction center. PSAD may encode the ferredoxin-docking protein.</text>
</comment>
<comment type="interaction">
    <interactant intactId="EBI-864919">
        <id>P12353</id>
    </interactant>
    <interactant intactId="EBI-864933">
        <id>P00221</id>
        <label>PETF</label>
    </interactant>
    <organismsDiffer>false</organismsDiffer>
    <experiments>2</experiments>
</comment>
<comment type="subcellular location">
    <subcellularLocation>
        <location evidence="3">Plastid</location>
        <location evidence="3">Chloroplast thylakoid membrane</location>
        <topology evidence="3">Peripheral membrane protein</topology>
        <orientation evidence="3">Stromal side</orientation>
    </subcellularLocation>
</comment>
<comment type="induction">
    <text evidence="5">By light.</text>
</comment>
<comment type="similarity">
    <text evidence="6">Belongs to the PsaD family.</text>
</comment>